<reference key="1">
    <citation type="submission" date="2006-08" db="EMBL/GenBank/DDBJ databases">
        <title>Positive selection in transcription factor genes on the human lineage.</title>
        <authorList>
            <person name="Nickel G.C."/>
            <person name="Tefft D.L."/>
            <person name="Trevarthen K."/>
            <person name="Funt J."/>
            <person name="Adams M.D."/>
        </authorList>
    </citation>
    <scope>NUCLEOTIDE SEQUENCE [GENOMIC DNA]</scope>
</reference>
<accession>A2T7H5</accession>
<proteinExistence type="inferred from homology"/>
<gene>
    <name type="primary">CDX1</name>
</gene>
<keyword id="KW-0010">Activator</keyword>
<keyword id="KW-0217">Developmental protein</keyword>
<keyword id="KW-0238">DNA-binding</keyword>
<keyword id="KW-0371">Homeobox</keyword>
<keyword id="KW-0539">Nucleus</keyword>
<keyword id="KW-0804">Transcription</keyword>
<keyword id="KW-0805">Transcription regulation</keyword>
<comment type="function">
    <text evidence="1">Plays a role in transcriptional regulation. Involved in activated KRAS-mediated transcriptional activation of PRKD1 in colorectal cancer (CRC) cells. Binds to the PRKD1 promoter in colorectal cancer (CRC) cells. Could play a role in the terminal differentiation of the intestine. Binds preferentially to methylated DNA.</text>
</comment>
<comment type="subcellular location">
    <subcellularLocation>
        <location evidence="2">Nucleus</location>
    </subcellularLocation>
</comment>
<comment type="similarity">
    <text evidence="4">Belongs to the Caudal homeobox family.</text>
</comment>
<feature type="chain" id="PRO_0000285408" description="Homeobox protein CDX-1">
    <location>
        <begin position="1"/>
        <end position="265"/>
    </location>
</feature>
<feature type="DNA-binding region" description="Homeobox" evidence="2">
    <location>
        <begin position="154"/>
        <end position="213"/>
    </location>
</feature>
<feature type="region of interest" description="Disordered" evidence="3">
    <location>
        <begin position="9"/>
        <end position="152"/>
    </location>
</feature>
<feature type="region of interest" description="Interaction with DNA" evidence="1">
    <location>
        <begin position="157"/>
        <end position="178"/>
    </location>
</feature>
<feature type="region of interest" description="Interaction with 5-mCpG DNA" evidence="1">
    <location>
        <begin position="196"/>
        <end position="207"/>
    </location>
</feature>
<feature type="region of interest" description="Disordered" evidence="3">
    <location>
        <begin position="206"/>
        <end position="265"/>
    </location>
</feature>
<feature type="compositionally biased region" description="Pro residues" evidence="3">
    <location>
        <begin position="30"/>
        <end position="43"/>
    </location>
</feature>
<feature type="compositionally biased region" description="Low complexity" evidence="3">
    <location>
        <begin position="73"/>
        <end position="92"/>
    </location>
</feature>
<feature type="compositionally biased region" description="Pro residues" evidence="3">
    <location>
        <begin position="93"/>
        <end position="108"/>
    </location>
</feature>
<feature type="compositionally biased region" description="Low complexity" evidence="3">
    <location>
        <begin position="110"/>
        <end position="126"/>
    </location>
</feature>
<feature type="compositionally biased region" description="Basic residues" evidence="3">
    <location>
        <begin position="206"/>
        <end position="217"/>
    </location>
</feature>
<feature type="compositionally biased region" description="Polar residues" evidence="3">
    <location>
        <begin position="245"/>
        <end position="256"/>
    </location>
</feature>
<name>CDX1_PONPY</name>
<evidence type="ECO:0000250" key="1">
    <source>
        <dbReference type="UniProtKB" id="P47902"/>
    </source>
</evidence>
<evidence type="ECO:0000255" key="2">
    <source>
        <dbReference type="PROSITE-ProRule" id="PRU00108"/>
    </source>
</evidence>
<evidence type="ECO:0000256" key="3">
    <source>
        <dbReference type="SAM" id="MobiDB-lite"/>
    </source>
</evidence>
<evidence type="ECO:0000305" key="4"/>
<sequence length="265" mass="28318">MYVGYVLDKDSPVYPGPARPASLGLGPQAYGPPAPPPAPPQYPDFPSYSHVEPAPAPPTAWGAPFPAPKDDWAAAYGPGPAAPAASPASLAFGPPPDFSPVPAPPGPGPGLLAQPLGGPGTPSSPGAQRRTPYEWMRRSVAAGGGGVSGKTRTKDKYRVVYTDHQRLELEKEFHYSRYITIRRKSELAANLGLTERQVKIWFQNRRAKERKVNKKKQQQQQPPQPPTAHDITATPARPSLGGLCPSNTSLLATSSPMPVKEEFLP</sequence>
<protein>
    <recommendedName>
        <fullName>Homeobox protein CDX-1</fullName>
    </recommendedName>
    <alternativeName>
        <fullName>Caudal-type homeobox protein 1</fullName>
    </alternativeName>
</protein>
<organism>
    <name type="scientific">Pongo pygmaeus</name>
    <name type="common">Bornean orangutan</name>
    <dbReference type="NCBI Taxonomy" id="9600"/>
    <lineage>
        <taxon>Eukaryota</taxon>
        <taxon>Metazoa</taxon>
        <taxon>Chordata</taxon>
        <taxon>Craniata</taxon>
        <taxon>Vertebrata</taxon>
        <taxon>Euteleostomi</taxon>
        <taxon>Mammalia</taxon>
        <taxon>Eutheria</taxon>
        <taxon>Euarchontoglires</taxon>
        <taxon>Primates</taxon>
        <taxon>Haplorrhini</taxon>
        <taxon>Catarrhini</taxon>
        <taxon>Hominidae</taxon>
        <taxon>Pongo</taxon>
    </lineage>
</organism>
<dbReference type="EMBL" id="DQ977476">
    <property type="protein sequence ID" value="ABM89253.1"/>
    <property type="molecule type" value="Genomic_DNA"/>
</dbReference>
<dbReference type="RefSeq" id="XP_054344397.1">
    <property type="nucleotide sequence ID" value="XM_054488422.2"/>
</dbReference>
<dbReference type="SMR" id="A2T7H5"/>
<dbReference type="GeneID" id="129036805"/>
<dbReference type="GO" id="GO:0005634">
    <property type="term" value="C:nucleus"/>
    <property type="evidence" value="ECO:0007669"/>
    <property type="project" value="UniProtKB-SubCell"/>
</dbReference>
<dbReference type="GO" id="GO:0003700">
    <property type="term" value="F:DNA-binding transcription factor activity"/>
    <property type="evidence" value="ECO:0000250"/>
    <property type="project" value="UniProtKB"/>
</dbReference>
<dbReference type="GO" id="GO:0000981">
    <property type="term" value="F:DNA-binding transcription factor activity, RNA polymerase II-specific"/>
    <property type="evidence" value="ECO:0007669"/>
    <property type="project" value="InterPro"/>
</dbReference>
<dbReference type="GO" id="GO:0008327">
    <property type="term" value="F:methyl-CpG binding"/>
    <property type="evidence" value="ECO:0000250"/>
    <property type="project" value="UniProtKB"/>
</dbReference>
<dbReference type="GO" id="GO:0000977">
    <property type="term" value="F:RNA polymerase II transcription regulatory region sequence-specific DNA binding"/>
    <property type="evidence" value="ECO:0007669"/>
    <property type="project" value="TreeGrafter"/>
</dbReference>
<dbReference type="GO" id="GO:0000976">
    <property type="term" value="F:transcription cis-regulatory region binding"/>
    <property type="evidence" value="ECO:0000250"/>
    <property type="project" value="UniProtKB"/>
</dbReference>
<dbReference type="GO" id="GO:0009887">
    <property type="term" value="P:animal organ morphogenesis"/>
    <property type="evidence" value="ECO:0007669"/>
    <property type="project" value="TreeGrafter"/>
</dbReference>
<dbReference type="GO" id="GO:0009948">
    <property type="term" value="P:anterior/posterior axis specification"/>
    <property type="evidence" value="ECO:0007669"/>
    <property type="project" value="TreeGrafter"/>
</dbReference>
<dbReference type="GO" id="GO:0030154">
    <property type="term" value="P:cell differentiation"/>
    <property type="evidence" value="ECO:0007669"/>
    <property type="project" value="TreeGrafter"/>
</dbReference>
<dbReference type="GO" id="GO:0045944">
    <property type="term" value="P:positive regulation of transcription by RNA polymerase II"/>
    <property type="evidence" value="ECO:0000250"/>
    <property type="project" value="UniProtKB"/>
</dbReference>
<dbReference type="GO" id="GO:0014807">
    <property type="term" value="P:regulation of somitogenesis"/>
    <property type="evidence" value="ECO:0000250"/>
    <property type="project" value="UniProtKB"/>
</dbReference>
<dbReference type="CDD" id="cd00086">
    <property type="entry name" value="homeodomain"/>
    <property type="match status" value="1"/>
</dbReference>
<dbReference type="FunFam" id="1.10.10.60:FF:000089">
    <property type="entry name" value="Caudal type homeobox 4"/>
    <property type="match status" value="1"/>
</dbReference>
<dbReference type="Gene3D" id="1.10.10.60">
    <property type="entry name" value="Homeodomain-like"/>
    <property type="match status" value="1"/>
</dbReference>
<dbReference type="InterPro" id="IPR006820">
    <property type="entry name" value="Caudal_activation_dom"/>
</dbReference>
<dbReference type="InterPro" id="IPR047152">
    <property type="entry name" value="Caudal_homeobox"/>
</dbReference>
<dbReference type="InterPro" id="IPR001356">
    <property type="entry name" value="HD"/>
</dbReference>
<dbReference type="InterPro" id="IPR020479">
    <property type="entry name" value="HD_metazoa"/>
</dbReference>
<dbReference type="InterPro" id="IPR017970">
    <property type="entry name" value="Homeobox_CS"/>
</dbReference>
<dbReference type="InterPro" id="IPR009057">
    <property type="entry name" value="Homeodomain-like_sf"/>
</dbReference>
<dbReference type="InterPro" id="IPR000047">
    <property type="entry name" value="HTH_motif"/>
</dbReference>
<dbReference type="PANTHER" id="PTHR24332">
    <property type="entry name" value="HOMEOBOX PROTEIN CDX"/>
    <property type="match status" value="1"/>
</dbReference>
<dbReference type="PANTHER" id="PTHR24332:SF16">
    <property type="entry name" value="HOMEOBOX PROTEIN CDX-1"/>
    <property type="match status" value="1"/>
</dbReference>
<dbReference type="Pfam" id="PF04731">
    <property type="entry name" value="Caudal_act"/>
    <property type="match status" value="1"/>
</dbReference>
<dbReference type="Pfam" id="PF00046">
    <property type="entry name" value="Homeodomain"/>
    <property type="match status" value="1"/>
</dbReference>
<dbReference type="PRINTS" id="PR00024">
    <property type="entry name" value="HOMEOBOX"/>
</dbReference>
<dbReference type="PRINTS" id="PR00031">
    <property type="entry name" value="HTHREPRESSR"/>
</dbReference>
<dbReference type="SMART" id="SM00389">
    <property type="entry name" value="HOX"/>
    <property type="match status" value="1"/>
</dbReference>
<dbReference type="SUPFAM" id="SSF46689">
    <property type="entry name" value="Homeodomain-like"/>
    <property type="match status" value="1"/>
</dbReference>
<dbReference type="PROSITE" id="PS00027">
    <property type="entry name" value="HOMEOBOX_1"/>
    <property type="match status" value="1"/>
</dbReference>
<dbReference type="PROSITE" id="PS50071">
    <property type="entry name" value="HOMEOBOX_2"/>
    <property type="match status" value="1"/>
</dbReference>